<accession>Q8TC92</accession>
<accession>A4GU15</accession>
<accession>A6NMH9</accession>
<accession>B7Z5K1</accession>
<accession>Q2TU81</accession>
<accession>Q5VT11</accession>
<accession>Q9NWE0</accession>
<feature type="chain" id="PRO_0000295900" description="Ecto-NOX disulfide-thiol exchanger 1">
    <location>
        <begin position="1"/>
        <end position="643"/>
    </location>
</feature>
<feature type="domain" description="RRM" evidence="2">
    <location>
        <begin position="142"/>
        <end position="221"/>
    </location>
</feature>
<feature type="coiled-coil region" evidence="1">
    <location>
        <begin position="307"/>
        <end position="342"/>
    </location>
</feature>
<feature type="coiled-coil region" evidence="1">
    <location>
        <begin position="425"/>
        <end position="570"/>
    </location>
</feature>
<feature type="splice variant" id="VSP_056985" description="In isoform 2." evidence="7">
    <location>
        <begin position="1"/>
        <end position="187"/>
    </location>
</feature>
<feature type="splice variant" id="VSP_056986" description="In isoform 2." evidence="7">
    <original>AL</original>
    <variation>GA</variation>
    <location>
        <begin position="421"/>
        <end position="422"/>
    </location>
</feature>
<feature type="splice variant" id="VSP_056987" description="In isoform 2." evidence="7">
    <location>
        <begin position="423"/>
        <end position="643"/>
    </location>
</feature>
<feature type="sequence variant" id="VAR_052205" description="In dbSNP:rs7338624." evidence="6">
    <original>E</original>
    <variation>D</variation>
    <location>
        <position position="16"/>
    </location>
</feature>
<feature type="sequence conflict" description="In Ref. 2; AAT08035." evidence="8" ref="2">
    <original>L</original>
    <variation>S</variation>
    <location>
        <position position="62"/>
    </location>
</feature>
<feature type="sequence conflict" description="In Ref. 2; AAT08035 and 3; BAA91442." evidence="8" ref="2 3">
    <original>F</original>
    <variation>S</variation>
    <location>
        <position position="279"/>
    </location>
</feature>
<sequence length="643" mass="73348">MVDAGGVENITQLPQELPQMMAAAADGLGSIAIDTTQLNMSVTDPTAWATAMNNLGMVPVGLPGQQLVSDSICVPGFDPSLNMMTGITPINPMIPGLGLVPPPPPTEVAVVKEIIHCKSCTLFPQNPNLPPPSTRERPPGCKTVFVGGLPENATEEIIQEVFEQCGDITAIRKSKKNFCHIRFAEEFMVDKAIYLSGYRMRLGSSTDKKDSGRLHVDFAQARDDFYEWECKQRMRAREERHRRKLEEDRLRPPSPPAIMHYSEHEAALLAEKLKDDSKFSEAITVLLSWIERGEVNRRSANQFYSMVQSANSHVRRLMNEKATHEQEMEEAKENFKNALTGILTQFEQIVAVFNASTRQKAWDHFSKAQRKNIDIWRKHSEELRNAQSEQLMGIRREEEMEMSDDENCDSPTKKMRVDESALAAQAYALKEENDSLRWQLDAYRNEVELLKQEKEQLFRTEENLTKDQQLQFLQQTMQGMQQQLLTIQEELNNKKSELEQAKEEQSHTQALLKVLQEQLKGTKELVETNGHSHEDSNEINVLTVALVNQDRENNIEKRSQGLKSEKEALLIGIISTFLHVHPFGANIEYLWSYMQQLDSKISANEIEMLLMRLPRMFKQEFTGVGATLEKRWKLCAFEGIKTT</sequence>
<name>ENOX1_HUMAN</name>
<protein>
    <recommendedName>
        <fullName>Ecto-NOX disulfide-thiol exchanger 1</fullName>
    </recommendedName>
    <alternativeName>
        <fullName>Candidate growth-related and time keeping constitutive hydroquinone [NADH] oxidase</fullName>
        <shortName>cCNOX</shortName>
    </alternativeName>
    <alternativeName>
        <fullName>Cell proliferation-inducing gene 38 protein</fullName>
    </alternativeName>
    <alternativeName>
        <fullName>Constitutive Ecto-NOX</fullName>
        <shortName>cNOX</shortName>
    </alternativeName>
    <domain>
        <recommendedName>
            <fullName>Hydroquinone [NADH] oxidase</fullName>
            <ecNumber>1.-.-.-</ecNumber>
        </recommendedName>
    </domain>
    <domain>
        <recommendedName>
            <fullName>Protein disulfide-thiol oxidoreductase</fullName>
            <ecNumber>1.-.-.-</ecNumber>
        </recommendedName>
    </domain>
</protein>
<comment type="function">
    <text evidence="3 4 5 6">Probably acts as a terminal oxidase of plasma electron transport from cytosolic NAD(P)H via hydroquinones to acceptors at the cell surface. Hydroquinone oxidase activity alternates with a protein disulfide-thiol interchange/oxidoreductase activity which may control physical membrane displacements associated with vesicle budding or cell enlargement. The activities oscillate with a period length of 24 minutes and play a role in control of the ultradian cellular biological clock.</text>
</comment>
<comment type="cofactor">
    <cofactor evidence="5">
        <name>Cu cation</name>
        <dbReference type="ChEBI" id="CHEBI:23378"/>
    </cofactor>
</comment>
<comment type="activity regulation">
    <text evidence="3 4">Not inhibited by the antitumor sulfonylurea LY181984, the vabilloid capsaicin, and retinoids.</text>
</comment>
<comment type="interaction">
    <interactant intactId="EBI-713221">
        <id>Q8TC92</id>
    </interactant>
    <interactant intactId="EBI-10179508">
        <id>Q16206-2</id>
        <label>ENOX2</label>
    </interactant>
    <organismsDiffer>false</organismsDiffer>
    <experiments>3</experiments>
</comment>
<comment type="interaction">
    <interactant intactId="EBI-713221">
        <id>Q8TC92</id>
    </interactant>
    <interactant intactId="EBI-739467">
        <id>Q9H8Y8</id>
        <label>GORASP2</label>
    </interactant>
    <organismsDiffer>false</organismsDiffer>
    <experiments>3</experiments>
</comment>
<comment type="interaction">
    <interactant intactId="EBI-713221">
        <id>Q8TC92</id>
    </interactant>
    <interactant intactId="EBI-739832">
        <id>Q8TBB1</id>
        <label>LNX1</label>
    </interactant>
    <organismsDiffer>false</organismsDiffer>
    <experiments>4</experiments>
</comment>
<comment type="interaction">
    <interactant intactId="EBI-713221">
        <id>Q8TC92</id>
    </interactant>
    <interactant intactId="EBI-727004">
        <id>O00560</id>
        <label>SDCBP</label>
    </interactant>
    <organismsDiffer>false</organismsDiffer>
    <experiments>3</experiments>
</comment>
<comment type="interaction">
    <interactant intactId="EBI-713221">
        <id>Q8TC92</id>
    </interactant>
    <interactant intactId="EBI-2129899">
        <id>Q96BQ3</id>
        <label>TRIM43</label>
    </interactant>
    <organismsDiffer>false</organismsDiffer>
    <experiments>6</experiments>
</comment>
<comment type="interaction">
    <interactant intactId="EBI-713221">
        <id>Q8TC92</id>
    </interactant>
    <interactant intactId="EBI-746595">
        <id>Q96E35</id>
        <label>ZMYND19</label>
    </interactant>
    <organismsDiffer>false</organismsDiffer>
    <experiments>6</experiments>
</comment>
<comment type="subcellular location">
    <subcellularLocation>
        <location evidence="3">Cell membrane</location>
    </subcellularLocation>
    <subcellularLocation>
        <location evidence="3">Secreted</location>
        <location evidence="3">Extracellular space</location>
    </subcellularLocation>
    <text>Extracellular and plasma membrane-associated.</text>
</comment>
<comment type="alternative products">
    <event type="alternative splicing"/>
    <isoform>
        <id>Q8TC92-1</id>
        <name>1</name>
        <sequence type="displayed"/>
    </isoform>
    <isoform>
        <id>Q8TC92-2</id>
        <name>2</name>
        <sequence type="described" ref="VSP_056985 VSP_056986 VSP_056987"/>
    </isoform>
</comment>
<comment type="tissue specificity">
    <text>Expressed in lymphocyte cells, breast and breast cancer (at protein level). Found in the sera of cancer patients with a wide variety of cancers including breast, prostate, lung and ovarian cancers, leukemias, and lymphomas. Found also in the serum of healthy volunteers or patients with disorders other than cancer. Probably shed into serum by cancer cells.</text>
</comment>
<comment type="similarity">
    <text evidence="8">Belongs to the ENOX family.</text>
</comment>
<dbReference type="EC" id="1.-.-.-"/>
<dbReference type="EMBL" id="EF432052">
    <property type="protein sequence ID" value="ABO28524.1"/>
    <property type="molecule type" value="mRNA"/>
</dbReference>
<dbReference type="EMBL" id="AY513282">
    <property type="protein sequence ID" value="AAT08035.1"/>
    <property type="molecule type" value="mRNA"/>
</dbReference>
<dbReference type="EMBL" id="AK000956">
    <property type="protein sequence ID" value="BAA91442.1"/>
    <property type="molecule type" value="mRNA"/>
</dbReference>
<dbReference type="EMBL" id="AK299053">
    <property type="protein sequence ID" value="BAH12937.1"/>
    <property type="molecule type" value="mRNA"/>
</dbReference>
<dbReference type="EMBL" id="AL136959">
    <property type="status" value="NOT_ANNOTATED_CDS"/>
    <property type="molecule type" value="Genomic_DNA"/>
</dbReference>
<dbReference type="EMBL" id="AL161714">
    <property type="status" value="NOT_ANNOTATED_CDS"/>
    <property type="molecule type" value="Genomic_DNA"/>
</dbReference>
<dbReference type="EMBL" id="AL162713">
    <property type="status" value="NOT_ANNOTATED_CDS"/>
    <property type="molecule type" value="Genomic_DNA"/>
</dbReference>
<dbReference type="EMBL" id="AL445703">
    <property type="status" value="NOT_ANNOTATED_CDS"/>
    <property type="molecule type" value="Genomic_DNA"/>
</dbReference>
<dbReference type="EMBL" id="AL138823">
    <property type="status" value="NOT_ANNOTATED_CDS"/>
    <property type="molecule type" value="Genomic_DNA"/>
</dbReference>
<dbReference type="EMBL" id="AL607148">
    <property type="status" value="NOT_ANNOTATED_CDS"/>
    <property type="molecule type" value="Genomic_DNA"/>
</dbReference>
<dbReference type="EMBL" id="AL627430">
    <property type="status" value="NOT_ANNOTATED_CDS"/>
    <property type="molecule type" value="Genomic_DNA"/>
</dbReference>
<dbReference type="EMBL" id="CH471075">
    <property type="protein sequence ID" value="EAX08693.1"/>
    <property type="molecule type" value="Genomic_DNA"/>
</dbReference>
<dbReference type="EMBL" id="BC024178">
    <property type="protein sequence ID" value="AAH24178.1"/>
    <property type="molecule type" value="mRNA"/>
</dbReference>
<dbReference type="CCDS" id="CCDS9389.1">
    <molecule id="Q8TC92-1"/>
</dbReference>
<dbReference type="RefSeq" id="NP_001121087.1">
    <molecule id="Q8TC92-1"/>
    <property type="nucleotide sequence ID" value="NM_001127615.3"/>
</dbReference>
<dbReference type="RefSeq" id="NP_001229792.1">
    <molecule id="Q8TC92-1"/>
    <property type="nucleotide sequence ID" value="NM_001242863.3"/>
</dbReference>
<dbReference type="RefSeq" id="NP_001334893.1">
    <molecule id="Q8TC92-1"/>
    <property type="nucleotide sequence ID" value="NM_001347964.2"/>
</dbReference>
<dbReference type="RefSeq" id="NP_001334894.1">
    <molecule id="Q8TC92-1"/>
    <property type="nucleotide sequence ID" value="NM_001347965.2"/>
</dbReference>
<dbReference type="RefSeq" id="NP_001334895.1">
    <molecule id="Q8TC92-1"/>
    <property type="nucleotide sequence ID" value="NM_001347966.2"/>
</dbReference>
<dbReference type="RefSeq" id="NP_001334896.1">
    <molecule id="Q8TC92-1"/>
    <property type="nucleotide sequence ID" value="NM_001347967.2"/>
</dbReference>
<dbReference type="RefSeq" id="NP_001334897.1">
    <molecule id="Q8TC92-1"/>
    <property type="nucleotide sequence ID" value="NM_001347968.2"/>
</dbReference>
<dbReference type="RefSeq" id="NP_001334898.1">
    <molecule id="Q8TC92-1"/>
    <property type="nucleotide sequence ID" value="NM_001347969.2"/>
</dbReference>
<dbReference type="RefSeq" id="NP_060463.2">
    <molecule id="Q8TC92-1"/>
    <property type="nucleotide sequence ID" value="NM_017993.5"/>
</dbReference>
<dbReference type="RefSeq" id="XP_011533428.1">
    <property type="nucleotide sequence ID" value="XM_011535126.2"/>
</dbReference>
<dbReference type="RefSeq" id="XP_011533429.1">
    <molecule id="Q8TC92-1"/>
    <property type="nucleotide sequence ID" value="XM_011535127.4"/>
</dbReference>
<dbReference type="RefSeq" id="XP_016876126.1">
    <property type="nucleotide sequence ID" value="XM_017020637.1"/>
</dbReference>
<dbReference type="RefSeq" id="XP_016876127.1">
    <property type="nucleotide sequence ID" value="XM_017020638.1"/>
</dbReference>
<dbReference type="RefSeq" id="XP_024305141.1">
    <molecule id="Q8TC92-1"/>
    <property type="nucleotide sequence ID" value="XM_024449373.2"/>
</dbReference>
<dbReference type="RefSeq" id="XP_024305142.1">
    <molecule id="Q8TC92-1"/>
    <property type="nucleotide sequence ID" value="XM_024449374.2"/>
</dbReference>
<dbReference type="RefSeq" id="XP_047286372.1">
    <molecule id="Q8TC92-1"/>
    <property type="nucleotide sequence ID" value="XM_047430416.1"/>
</dbReference>
<dbReference type="RefSeq" id="XP_047286373.1">
    <molecule id="Q8TC92-1"/>
    <property type="nucleotide sequence ID" value="XM_047430417.1"/>
</dbReference>
<dbReference type="RefSeq" id="XP_047286374.1">
    <molecule id="Q8TC92-1"/>
    <property type="nucleotide sequence ID" value="XM_047430418.1"/>
</dbReference>
<dbReference type="RefSeq" id="XP_047286375.1">
    <molecule id="Q8TC92-1"/>
    <property type="nucleotide sequence ID" value="XM_047430419.1"/>
</dbReference>
<dbReference type="RefSeq" id="XP_047286376.1">
    <molecule id="Q8TC92-1"/>
    <property type="nucleotide sequence ID" value="XM_047430420.1"/>
</dbReference>
<dbReference type="RefSeq" id="XP_047286377.1">
    <molecule id="Q8TC92-1"/>
    <property type="nucleotide sequence ID" value="XM_047430421.1"/>
</dbReference>
<dbReference type="RefSeq" id="XP_047286378.1">
    <molecule id="Q8TC92-1"/>
    <property type="nucleotide sequence ID" value="XM_047430422.1"/>
</dbReference>
<dbReference type="RefSeq" id="XP_047286379.1">
    <molecule id="Q8TC92-1"/>
    <property type="nucleotide sequence ID" value="XM_047430423.1"/>
</dbReference>
<dbReference type="RefSeq" id="XP_054230609.1">
    <molecule id="Q8TC92-1"/>
    <property type="nucleotide sequence ID" value="XM_054374634.1"/>
</dbReference>
<dbReference type="RefSeq" id="XP_054230610.1">
    <molecule id="Q8TC92-1"/>
    <property type="nucleotide sequence ID" value="XM_054374635.1"/>
</dbReference>
<dbReference type="RefSeq" id="XP_054230611.1">
    <molecule id="Q8TC92-1"/>
    <property type="nucleotide sequence ID" value="XM_054374636.1"/>
</dbReference>
<dbReference type="RefSeq" id="XP_054230612.1">
    <molecule id="Q8TC92-1"/>
    <property type="nucleotide sequence ID" value="XM_054374637.1"/>
</dbReference>
<dbReference type="RefSeq" id="XP_054230613.1">
    <molecule id="Q8TC92-1"/>
    <property type="nucleotide sequence ID" value="XM_054374638.1"/>
</dbReference>
<dbReference type="RefSeq" id="XP_054230614.1">
    <molecule id="Q8TC92-1"/>
    <property type="nucleotide sequence ID" value="XM_054374639.1"/>
</dbReference>
<dbReference type="RefSeq" id="XP_054230615.1">
    <molecule id="Q8TC92-1"/>
    <property type="nucleotide sequence ID" value="XM_054374640.1"/>
</dbReference>
<dbReference type="RefSeq" id="XP_054230616.1">
    <molecule id="Q8TC92-1"/>
    <property type="nucleotide sequence ID" value="XM_054374641.1"/>
</dbReference>
<dbReference type="RefSeq" id="XP_054230617.1">
    <molecule id="Q8TC92-1"/>
    <property type="nucleotide sequence ID" value="XM_054374642.1"/>
</dbReference>
<dbReference type="RefSeq" id="XP_054230618.1">
    <molecule id="Q8TC92-1"/>
    <property type="nucleotide sequence ID" value="XM_054374643.1"/>
</dbReference>
<dbReference type="SMR" id="Q8TC92"/>
<dbReference type="BioGRID" id="120385">
    <property type="interactions" value="21"/>
</dbReference>
<dbReference type="FunCoup" id="Q8TC92">
    <property type="interactions" value="1310"/>
</dbReference>
<dbReference type="IntAct" id="Q8TC92">
    <property type="interactions" value="19"/>
</dbReference>
<dbReference type="STRING" id="9606.ENSP00000261488"/>
<dbReference type="GlyGen" id="Q8TC92">
    <property type="glycosylation" value="1 site, 1 O-linked glycan (1 site)"/>
</dbReference>
<dbReference type="iPTMnet" id="Q8TC92"/>
<dbReference type="PhosphoSitePlus" id="Q8TC92"/>
<dbReference type="BioMuta" id="ENOX1"/>
<dbReference type="DMDM" id="74760449"/>
<dbReference type="jPOST" id="Q8TC92"/>
<dbReference type="MassIVE" id="Q8TC92"/>
<dbReference type="PaxDb" id="9606-ENSP00000261488"/>
<dbReference type="PeptideAtlas" id="Q8TC92"/>
<dbReference type="ProteomicsDB" id="6698"/>
<dbReference type="ProteomicsDB" id="74102">
    <molecule id="Q8TC92-1"/>
</dbReference>
<dbReference type="Antibodypedia" id="23523">
    <property type="antibodies" value="87 antibodies from 21 providers"/>
</dbReference>
<dbReference type="DNASU" id="55068"/>
<dbReference type="Ensembl" id="ENST00000261488.10">
    <molecule id="Q8TC92-1"/>
    <property type="protein sequence ID" value="ENSP00000261488.6"/>
    <property type="gene ID" value="ENSG00000120658.14"/>
</dbReference>
<dbReference type="Ensembl" id="ENST00000690772.1">
    <molecule id="Q8TC92-1"/>
    <property type="protein sequence ID" value="ENSP00000509229.1"/>
    <property type="gene ID" value="ENSG00000120658.14"/>
</dbReference>
<dbReference type="GeneID" id="55068"/>
<dbReference type="KEGG" id="hsa:55068"/>
<dbReference type="MANE-Select" id="ENST00000690772.1">
    <property type="protein sequence ID" value="ENSP00000509229.1"/>
    <property type="RefSeq nucleotide sequence ID" value="NM_001347969.2"/>
    <property type="RefSeq protein sequence ID" value="NP_001334898.1"/>
</dbReference>
<dbReference type="UCSC" id="uc001uzc.5">
    <molecule id="Q8TC92-1"/>
    <property type="organism name" value="human"/>
</dbReference>
<dbReference type="AGR" id="HGNC:25474"/>
<dbReference type="CTD" id="55068"/>
<dbReference type="DisGeNET" id="55068"/>
<dbReference type="GeneCards" id="ENOX1"/>
<dbReference type="HGNC" id="HGNC:25474">
    <property type="gene designation" value="ENOX1"/>
</dbReference>
<dbReference type="HPA" id="ENSG00000120658">
    <property type="expression patterns" value="Low tissue specificity"/>
</dbReference>
<dbReference type="MalaCards" id="ENOX1"/>
<dbReference type="MIM" id="610914">
    <property type="type" value="gene"/>
</dbReference>
<dbReference type="neXtProt" id="NX_Q8TC92"/>
<dbReference type="OpenTargets" id="ENSG00000120658"/>
<dbReference type="PharmGKB" id="PA162385069"/>
<dbReference type="VEuPathDB" id="HostDB:ENSG00000120658"/>
<dbReference type="eggNOG" id="ENOG502QQ8G">
    <property type="taxonomic scope" value="Eukaryota"/>
</dbReference>
<dbReference type="GeneTree" id="ENSGT00390000006788"/>
<dbReference type="HOGENOM" id="CLU_019282_1_1_1"/>
<dbReference type="InParanoid" id="Q8TC92"/>
<dbReference type="OMA" id="KELTQMM"/>
<dbReference type="OrthoDB" id="10039782at2759"/>
<dbReference type="PAN-GO" id="Q8TC92">
    <property type="GO annotations" value="2 GO annotations based on evolutionary models"/>
</dbReference>
<dbReference type="PhylomeDB" id="Q8TC92"/>
<dbReference type="TreeFam" id="TF323802"/>
<dbReference type="PathwayCommons" id="Q8TC92"/>
<dbReference type="SignaLink" id="Q8TC92"/>
<dbReference type="SIGNOR" id="Q8TC92"/>
<dbReference type="BioGRID-ORCS" id="55068">
    <property type="hits" value="13 hits in 1147 CRISPR screens"/>
</dbReference>
<dbReference type="CD-CODE" id="1A18FFC4">
    <property type="entry name" value="Paraspeckle"/>
</dbReference>
<dbReference type="ChiTaRS" id="ENOX1">
    <property type="organism name" value="human"/>
</dbReference>
<dbReference type="GenomeRNAi" id="55068"/>
<dbReference type="Pharos" id="Q8TC92">
    <property type="development level" value="Tbio"/>
</dbReference>
<dbReference type="PRO" id="PR:Q8TC92"/>
<dbReference type="Proteomes" id="UP000005640">
    <property type="component" value="Chromosome 13"/>
</dbReference>
<dbReference type="RNAct" id="Q8TC92">
    <property type="molecule type" value="protein"/>
</dbReference>
<dbReference type="Bgee" id="ENSG00000120658">
    <property type="expression patterns" value="Expressed in sperm and 142 other cell types or tissues"/>
</dbReference>
<dbReference type="ExpressionAtlas" id="Q8TC92">
    <property type="expression patterns" value="baseline and differential"/>
</dbReference>
<dbReference type="GO" id="GO:0009897">
    <property type="term" value="C:external side of plasma membrane"/>
    <property type="evidence" value="ECO:0007669"/>
    <property type="project" value="InterPro"/>
</dbReference>
<dbReference type="GO" id="GO:0005576">
    <property type="term" value="C:extracellular region"/>
    <property type="evidence" value="ECO:0007669"/>
    <property type="project" value="UniProtKB-SubCell"/>
</dbReference>
<dbReference type="GO" id="GO:0005886">
    <property type="term" value="C:plasma membrane"/>
    <property type="evidence" value="ECO:0000314"/>
    <property type="project" value="HPA"/>
</dbReference>
<dbReference type="GO" id="GO:0003954">
    <property type="term" value="F:NADH dehydrogenase activity"/>
    <property type="evidence" value="ECO:0000314"/>
    <property type="project" value="FlyBase"/>
</dbReference>
<dbReference type="GO" id="GO:0003756">
    <property type="term" value="F:protein disulfide isomerase activity"/>
    <property type="evidence" value="ECO:0000314"/>
    <property type="project" value="FlyBase"/>
</dbReference>
<dbReference type="GO" id="GO:0003723">
    <property type="term" value="F:RNA binding"/>
    <property type="evidence" value="ECO:0007669"/>
    <property type="project" value="InterPro"/>
</dbReference>
<dbReference type="GO" id="GO:0007624">
    <property type="term" value="P:ultradian rhythm"/>
    <property type="evidence" value="ECO:0007669"/>
    <property type="project" value="InterPro"/>
</dbReference>
<dbReference type="CDD" id="cd12228">
    <property type="entry name" value="RRM_ENOX"/>
    <property type="match status" value="1"/>
</dbReference>
<dbReference type="FunFam" id="3.30.70.330:FF:000083">
    <property type="entry name" value="Putative ecto-NOX disulfide-thiol exchanger 1"/>
    <property type="match status" value="1"/>
</dbReference>
<dbReference type="Gene3D" id="3.30.70.330">
    <property type="match status" value="1"/>
</dbReference>
<dbReference type="InterPro" id="IPR038876">
    <property type="entry name" value="ENOX"/>
</dbReference>
<dbReference type="InterPro" id="IPR056611">
    <property type="entry name" value="ENOX1/2_dom"/>
</dbReference>
<dbReference type="InterPro" id="IPR034140">
    <property type="entry name" value="ENOX_RRM"/>
</dbReference>
<dbReference type="InterPro" id="IPR012677">
    <property type="entry name" value="Nucleotide-bd_a/b_plait_sf"/>
</dbReference>
<dbReference type="InterPro" id="IPR035979">
    <property type="entry name" value="RBD_domain_sf"/>
</dbReference>
<dbReference type="InterPro" id="IPR000504">
    <property type="entry name" value="RRM_dom"/>
</dbReference>
<dbReference type="PANTHER" id="PTHR16001">
    <property type="entry name" value="ECTO-NOX DISULFIDE-THIOL EXCHANGER"/>
    <property type="match status" value="1"/>
</dbReference>
<dbReference type="PANTHER" id="PTHR16001:SF6">
    <property type="entry name" value="ECTO-NOX DISULFIDE-THIOL EXCHANGER 1"/>
    <property type="match status" value="1"/>
</dbReference>
<dbReference type="Pfam" id="PF23267">
    <property type="entry name" value="ENOX1"/>
    <property type="match status" value="1"/>
</dbReference>
<dbReference type="Pfam" id="PF00076">
    <property type="entry name" value="RRM_1"/>
    <property type="match status" value="1"/>
</dbReference>
<dbReference type="SMART" id="SM00360">
    <property type="entry name" value="RRM"/>
    <property type="match status" value="1"/>
</dbReference>
<dbReference type="SUPFAM" id="SSF54928">
    <property type="entry name" value="RNA-binding domain, RBD"/>
    <property type="match status" value="1"/>
</dbReference>
<dbReference type="PROSITE" id="PS50102">
    <property type="entry name" value="RRM"/>
    <property type="match status" value="1"/>
</dbReference>
<reference key="1">
    <citation type="journal article" date="2008" name="Biochemistry">
        <title>Molecular cloning and characterization of a candidate human growth-related and time-keeping constitutive cell surface hydroquinone (NADH) oxidase.</title>
        <authorList>
            <person name="Jiang Z."/>
            <person name="Gorenstein N.M."/>
            <person name="Morre D.M."/>
            <person name="Morre D.J."/>
        </authorList>
    </citation>
    <scope>NUCLEOTIDE SEQUENCE [MRNA] (ISOFORM 1)</scope>
    <scope>FUNCTION</scope>
    <scope>VARIANT ASP-16</scope>
    <source>
        <tissue>Cervix carcinoma</tissue>
    </source>
</reference>
<reference key="2">
    <citation type="submission" date="2003-12" db="EMBL/GenBank/DDBJ databases">
        <title>Identification of a human cell proliferation inducing gene.</title>
        <authorList>
            <person name="Kim J.W."/>
        </authorList>
    </citation>
    <scope>NUCLEOTIDE SEQUENCE [LARGE SCALE MRNA] (ISOFORM 1)</scope>
</reference>
<reference key="3">
    <citation type="journal article" date="2004" name="Nat. Genet.">
        <title>Complete sequencing and characterization of 21,243 full-length human cDNAs.</title>
        <authorList>
            <person name="Ota T."/>
            <person name="Suzuki Y."/>
            <person name="Nishikawa T."/>
            <person name="Otsuki T."/>
            <person name="Sugiyama T."/>
            <person name="Irie R."/>
            <person name="Wakamatsu A."/>
            <person name="Hayashi K."/>
            <person name="Sato H."/>
            <person name="Nagai K."/>
            <person name="Kimura K."/>
            <person name="Makita H."/>
            <person name="Sekine M."/>
            <person name="Obayashi M."/>
            <person name="Nishi T."/>
            <person name="Shibahara T."/>
            <person name="Tanaka T."/>
            <person name="Ishii S."/>
            <person name="Yamamoto J."/>
            <person name="Saito K."/>
            <person name="Kawai Y."/>
            <person name="Isono Y."/>
            <person name="Nakamura Y."/>
            <person name="Nagahari K."/>
            <person name="Murakami K."/>
            <person name="Yasuda T."/>
            <person name="Iwayanagi T."/>
            <person name="Wagatsuma M."/>
            <person name="Shiratori A."/>
            <person name="Sudo H."/>
            <person name="Hosoiri T."/>
            <person name="Kaku Y."/>
            <person name="Kodaira H."/>
            <person name="Kondo H."/>
            <person name="Sugawara M."/>
            <person name="Takahashi M."/>
            <person name="Kanda K."/>
            <person name="Yokoi T."/>
            <person name="Furuya T."/>
            <person name="Kikkawa E."/>
            <person name="Omura Y."/>
            <person name="Abe K."/>
            <person name="Kamihara K."/>
            <person name="Katsuta N."/>
            <person name="Sato K."/>
            <person name="Tanikawa M."/>
            <person name="Yamazaki M."/>
            <person name="Ninomiya K."/>
            <person name="Ishibashi T."/>
            <person name="Yamashita H."/>
            <person name="Murakawa K."/>
            <person name="Fujimori K."/>
            <person name="Tanai H."/>
            <person name="Kimata M."/>
            <person name="Watanabe M."/>
            <person name="Hiraoka S."/>
            <person name="Chiba Y."/>
            <person name="Ishida S."/>
            <person name="Ono Y."/>
            <person name="Takiguchi S."/>
            <person name="Watanabe S."/>
            <person name="Yosida M."/>
            <person name="Hotuta T."/>
            <person name="Kusano J."/>
            <person name="Kanehori K."/>
            <person name="Takahashi-Fujii A."/>
            <person name="Hara H."/>
            <person name="Tanase T.-O."/>
            <person name="Nomura Y."/>
            <person name="Togiya S."/>
            <person name="Komai F."/>
            <person name="Hara R."/>
            <person name="Takeuchi K."/>
            <person name="Arita M."/>
            <person name="Imose N."/>
            <person name="Musashino K."/>
            <person name="Yuuki H."/>
            <person name="Oshima A."/>
            <person name="Sasaki N."/>
            <person name="Aotsuka S."/>
            <person name="Yoshikawa Y."/>
            <person name="Matsunawa H."/>
            <person name="Ichihara T."/>
            <person name="Shiohata N."/>
            <person name="Sano S."/>
            <person name="Moriya S."/>
            <person name="Momiyama H."/>
            <person name="Satoh N."/>
            <person name="Takami S."/>
            <person name="Terashima Y."/>
            <person name="Suzuki O."/>
            <person name="Nakagawa S."/>
            <person name="Senoh A."/>
            <person name="Mizoguchi H."/>
            <person name="Goto Y."/>
            <person name="Shimizu F."/>
            <person name="Wakebe H."/>
            <person name="Hishigaki H."/>
            <person name="Watanabe T."/>
            <person name="Sugiyama A."/>
            <person name="Takemoto M."/>
            <person name="Kawakami B."/>
            <person name="Yamazaki M."/>
            <person name="Watanabe K."/>
            <person name="Kumagai A."/>
            <person name="Itakura S."/>
            <person name="Fukuzumi Y."/>
            <person name="Fujimori Y."/>
            <person name="Komiyama M."/>
            <person name="Tashiro H."/>
            <person name="Tanigami A."/>
            <person name="Fujiwara T."/>
            <person name="Ono T."/>
            <person name="Yamada K."/>
            <person name="Fujii Y."/>
            <person name="Ozaki K."/>
            <person name="Hirao M."/>
            <person name="Ohmori Y."/>
            <person name="Kawabata A."/>
            <person name="Hikiji T."/>
            <person name="Kobatake N."/>
            <person name="Inagaki H."/>
            <person name="Ikema Y."/>
            <person name="Okamoto S."/>
            <person name="Okitani R."/>
            <person name="Kawakami T."/>
            <person name="Noguchi S."/>
            <person name="Itoh T."/>
            <person name="Shigeta K."/>
            <person name="Senba T."/>
            <person name="Matsumura K."/>
            <person name="Nakajima Y."/>
            <person name="Mizuno T."/>
            <person name="Morinaga M."/>
            <person name="Sasaki M."/>
            <person name="Togashi T."/>
            <person name="Oyama M."/>
            <person name="Hata H."/>
            <person name="Watanabe M."/>
            <person name="Komatsu T."/>
            <person name="Mizushima-Sugano J."/>
            <person name="Satoh T."/>
            <person name="Shirai Y."/>
            <person name="Takahashi Y."/>
            <person name="Nakagawa K."/>
            <person name="Okumura K."/>
            <person name="Nagase T."/>
            <person name="Nomura N."/>
            <person name="Kikuchi H."/>
            <person name="Masuho Y."/>
            <person name="Yamashita R."/>
            <person name="Nakai K."/>
            <person name="Yada T."/>
            <person name="Nakamura Y."/>
            <person name="Ohara O."/>
            <person name="Isogai T."/>
            <person name="Sugano S."/>
        </authorList>
    </citation>
    <scope>NUCLEOTIDE SEQUENCE [LARGE SCALE MRNA] (ISOFORMS 1 AND 2)</scope>
    <source>
        <tissue>Embryo</tissue>
    </source>
</reference>
<reference key="4">
    <citation type="journal article" date="2004" name="Nature">
        <title>The DNA sequence and analysis of human chromosome 13.</title>
        <authorList>
            <person name="Dunham A."/>
            <person name="Matthews L.H."/>
            <person name="Burton J."/>
            <person name="Ashurst J.L."/>
            <person name="Howe K.L."/>
            <person name="Ashcroft K.J."/>
            <person name="Beare D.M."/>
            <person name="Burford D.C."/>
            <person name="Hunt S.E."/>
            <person name="Griffiths-Jones S."/>
            <person name="Jones M.C."/>
            <person name="Keenan S.J."/>
            <person name="Oliver K."/>
            <person name="Scott C.E."/>
            <person name="Ainscough R."/>
            <person name="Almeida J.P."/>
            <person name="Ambrose K.D."/>
            <person name="Andrews D.T."/>
            <person name="Ashwell R.I.S."/>
            <person name="Babbage A.K."/>
            <person name="Bagguley C.L."/>
            <person name="Bailey J."/>
            <person name="Bannerjee R."/>
            <person name="Barlow K.F."/>
            <person name="Bates K."/>
            <person name="Beasley H."/>
            <person name="Bird C.P."/>
            <person name="Bray-Allen S."/>
            <person name="Brown A.J."/>
            <person name="Brown J.Y."/>
            <person name="Burrill W."/>
            <person name="Carder C."/>
            <person name="Carter N.P."/>
            <person name="Chapman J.C."/>
            <person name="Clamp M.E."/>
            <person name="Clark S.Y."/>
            <person name="Clarke G."/>
            <person name="Clee C.M."/>
            <person name="Clegg S.C."/>
            <person name="Cobley V."/>
            <person name="Collins J.E."/>
            <person name="Corby N."/>
            <person name="Coville G.J."/>
            <person name="Deloukas P."/>
            <person name="Dhami P."/>
            <person name="Dunham I."/>
            <person name="Dunn M."/>
            <person name="Earthrowl M.E."/>
            <person name="Ellington A.G."/>
            <person name="Faulkner L."/>
            <person name="Frankish A.G."/>
            <person name="Frankland J."/>
            <person name="French L."/>
            <person name="Garner P."/>
            <person name="Garnett J."/>
            <person name="Gilbert J.G.R."/>
            <person name="Gilson C.J."/>
            <person name="Ghori J."/>
            <person name="Grafham D.V."/>
            <person name="Gribble S.M."/>
            <person name="Griffiths C."/>
            <person name="Hall R.E."/>
            <person name="Hammond S."/>
            <person name="Harley J.L."/>
            <person name="Hart E.A."/>
            <person name="Heath P.D."/>
            <person name="Howden P.J."/>
            <person name="Huckle E.J."/>
            <person name="Hunt P.J."/>
            <person name="Hunt A.R."/>
            <person name="Johnson C."/>
            <person name="Johnson D."/>
            <person name="Kay M."/>
            <person name="Kimberley A.M."/>
            <person name="King A."/>
            <person name="Laird G.K."/>
            <person name="Langford C.J."/>
            <person name="Lawlor S."/>
            <person name="Leongamornlert D.A."/>
            <person name="Lloyd D.M."/>
            <person name="Lloyd C."/>
            <person name="Loveland J.E."/>
            <person name="Lovell J."/>
            <person name="Martin S."/>
            <person name="Mashreghi-Mohammadi M."/>
            <person name="McLaren S.J."/>
            <person name="McMurray A."/>
            <person name="Milne S."/>
            <person name="Moore M.J.F."/>
            <person name="Nickerson T."/>
            <person name="Palmer S.A."/>
            <person name="Pearce A.V."/>
            <person name="Peck A.I."/>
            <person name="Pelan S."/>
            <person name="Phillimore B."/>
            <person name="Porter K.M."/>
            <person name="Rice C.M."/>
            <person name="Searle S."/>
            <person name="Sehra H.K."/>
            <person name="Shownkeen R."/>
            <person name="Skuce C.D."/>
            <person name="Smith M."/>
            <person name="Steward C.A."/>
            <person name="Sycamore N."/>
            <person name="Tester J."/>
            <person name="Thomas D.W."/>
            <person name="Tracey A."/>
            <person name="Tromans A."/>
            <person name="Tubby B."/>
            <person name="Wall M."/>
            <person name="Wallis J.M."/>
            <person name="West A.P."/>
            <person name="Whitehead S.L."/>
            <person name="Willey D.L."/>
            <person name="Wilming L."/>
            <person name="Wray P.W."/>
            <person name="Wright M.W."/>
            <person name="Young L."/>
            <person name="Coulson A."/>
            <person name="Durbin R.M."/>
            <person name="Hubbard T."/>
            <person name="Sulston J.E."/>
            <person name="Beck S."/>
            <person name="Bentley D.R."/>
            <person name="Rogers J."/>
            <person name="Ross M.T."/>
        </authorList>
    </citation>
    <scope>NUCLEOTIDE SEQUENCE [LARGE SCALE GENOMIC DNA]</scope>
</reference>
<reference key="5">
    <citation type="submission" date="2005-07" db="EMBL/GenBank/DDBJ databases">
        <authorList>
            <person name="Mural R.J."/>
            <person name="Istrail S."/>
            <person name="Sutton G.G."/>
            <person name="Florea L."/>
            <person name="Halpern A.L."/>
            <person name="Mobarry C.M."/>
            <person name="Lippert R."/>
            <person name="Walenz B."/>
            <person name="Shatkay H."/>
            <person name="Dew I."/>
            <person name="Miller J.R."/>
            <person name="Flanigan M.J."/>
            <person name="Edwards N.J."/>
            <person name="Bolanos R."/>
            <person name="Fasulo D."/>
            <person name="Halldorsson B.V."/>
            <person name="Hannenhalli S."/>
            <person name="Turner R."/>
            <person name="Yooseph S."/>
            <person name="Lu F."/>
            <person name="Nusskern D.R."/>
            <person name="Shue B.C."/>
            <person name="Zheng X.H."/>
            <person name="Zhong F."/>
            <person name="Delcher A.L."/>
            <person name="Huson D.H."/>
            <person name="Kravitz S.A."/>
            <person name="Mouchard L."/>
            <person name="Reinert K."/>
            <person name="Remington K.A."/>
            <person name="Clark A.G."/>
            <person name="Waterman M.S."/>
            <person name="Eichler E.E."/>
            <person name="Adams M.D."/>
            <person name="Hunkapiller M.W."/>
            <person name="Myers E.W."/>
            <person name="Venter J.C."/>
        </authorList>
    </citation>
    <scope>NUCLEOTIDE SEQUENCE [LARGE SCALE GENOMIC DNA]</scope>
</reference>
<reference key="6">
    <citation type="journal article" date="2004" name="Genome Res.">
        <title>The status, quality, and expansion of the NIH full-length cDNA project: the Mammalian Gene Collection (MGC).</title>
        <authorList>
            <consortium name="The MGC Project Team"/>
        </authorList>
    </citation>
    <scope>NUCLEOTIDE SEQUENCE [LARGE SCALE MRNA] (ISOFORM 1)</scope>
    <source>
        <tissue>Testis</tissue>
    </source>
</reference>
<reference key="7">
    <citation type="journal article" date="2001" name="Arch. Biochem. Biophys.">
        <title>A drug-unresponsive and protease-resistant CNOX protein from human sera.</title>
        <authorList>
            <person name="Sedlak D."/>
            <person name="Moore D.M."/>
            <person name="Moore D.J."/>
        </authorList>
    </citation>
    <scope>FUNCTION</scope>
    <scope>SUBCELLULAR LOCATION</scope>
    <scope>ACTIVITY REGULATION</scope>
</reference>
<reference key="8">
    <citation type="journal article" date="2003" name="Cancer Lett.">
        <title>Sera from cancer patients contain two oscillating ECTO-NOX activities with different period lengths.</title>
        <authorList>
            <person name="Wang S."/>
            <person name="Morre D.M."/>
            <person name="Morre D.J."/>
        </authorList>
    </citation>
    <scope>FUNCTION</scope>
    <scope>ACTIVITY REGULATION</scope>
</reference>
<reference key="9">
    <citation type="journal article" date="2006" name="J. Inorg. Biochem.">
        <title>A role for copper in biological time-keeping.</title>
        <authorList>
            <person name="Jiang Z."/>
            <person name="Morre D.M."/>
            <person name="Morre D.J."/>
        </authorList>
    </citation>
    <scope>FUNCTION</scope>
    <scope>COFACTOR</scope>
</reference>
<organism>
    <name type="scientific">Homo sapiens</name>
    <name type="common">Human</name>
    <dbReference type="NCBI Taxonomy" id="9606"/>
    <lineage>
        <taxon>Eukaryota</taxon>
        <taxon>Metazoa</taxon>
        <taxon>Chordata</taxon>
        <taxon>Craniata</taxon>
        <taxon>Vertebrata</taxon>
        <taxon>Euteleostomi</taxon>
        <taxon>Mammalia</taxon>
        <taxon>Eutheria</taxon>
        <taxon>Euarchontoglires</taxon>
        <taxon>Primates</taxon>
        <taxon>Haplorrhini</taxon>
        <taxon>Catarrhini</taxon>
        <taxon>Hominidae</taxon>
        <taxon>Homo</taxon>
    </lineage>
</organism>
<proteinExistence type="evidence at protein level"/>
<gene>
    <name type="primary">ENOX1</name>
    <name type="ORF">PIG38</name>
</gene>
<evidence type="ECO:0000255" key="1"/>
<evidence type="ECO:0000255" key="2">
    <source>
        <dbReference type="PROSITE-ProRule" id="PRU00176"/>
    </source>
</evidence>
<evidence type="ECO:0000269" key="3">
    <source>
    </source>
</evidence>
<evidence type="ECO:0000269" key="4">
    <source>
    </source>
</evidence>
<evidence type="ECO:0000269" key="5">
    <source>
    </source>
</evidence>
<evidence type="ECO:0000269" key="6">
    <source>
    </source>
</evidence>
<evidence type="ECO:0000303" key="7">
    <source>
    </source>
</evidence>
<evidence type="ECO:0000305" key="8"/>
<keyword id="KW-0025">Alternative splicing</keyword>
<keyword id="KW-0090">Biological rhythms</keyword>
<keyword id="KW-1003">Cell membrane</keyword>
<keyword id="KW-0175">Coiled coil</keyword>
<keyword id="KW-0186">Copper</keyword>
<keyword id="KW-0249">Electron transport</keyword>
<keyword id="KW-0472">Membrane</keyword>
<keyword id="KW-0520">NAD</keyword>
<keyword id="KW-0560">Oxidoreductase</keyword>
<keyword id="KW-1267">Proteomics identification</keyword>
<keyword id="KW-1185">Reference proteome</keyword>
<keyword id="KW-0964">Secreted</keyword>
<keyword id="KW-0813">Transport</keyword>